<organism>
    <name type="scientific">Christiangramia forsetii (strain DSM 17595 / CGMCC 1.15422 / KT0803)</name>
    <name type="common">Gramella forsetii</name>
    <dbReference type="NCBI Taxonomy" id="411154"/>
    <lineage>
        <taxon>Bacteria</taxon>
        <taxon>Pseudomonadati</taxon>
        <taxon>Bacteroidota</taxon>
        <taxon>Flavobacteriia</taxon>
        <taxon>Flavobacteriales</taxon>
        <taxon>Flavobacteriaceae</taxon>
        <taxon>Christiangramia</taxon>
    </lineage>
</organism>
<reference key="1">
    <citation type="journal article" date="2006" name="Environ. Microbiol.">
        <title>Whole genome analysis of the marine Bacteroidetes'Gramella forsetii' reveals adaptations to degradation of polymeric organic matter.</title>
        <authorList>
            <person name="Bauer M."/>
            <person name="Kube M."/>
            <person name="Teeling H."/>
            <person name="Richter M."/>
            <person name="Lombardot T."/>
            <person name="Allers E."/>
            <person name="Wuerdemann C.A."/>
            <person name="Quast C."/>
            <person name="Kuhl H."/>
            <person name="Knaust F."/>
            <person name="Woebken D."/>
            <person name="Bischof K."/>
            <person name="Mussmann M."/>
            <person name="Choudhuri J.V."/>
            <person name="Meyer F."/>
            <person name="Reinhardt R."/>
            <person name="Amann R.I."/>
            <person name="Gloeckner F.O."/>
        </authorList>
    </citation>
    <scope>NUCLEOTIDE SEQUENCE [LARGE SCALE GENOMIC DNA]</scope>
    <source>
        <strain>DSM 17595 / CGMCC 1.15422 / KT0803</strain>
    </source>
</reference>
<name>SAHH_CHRFK</name>
<comment type="function">
    <text evidence="1">May play a key role in the regulation of the intracellular concentration of adenosylhomocysteine.</text>
</comment>
<comment type="catalytic activity">
    <reaction evidence="1">
        <text>S-adenosyl-L-homocysteine + H2O = L-homocysteine + adenosine</text>
        <dbReference type="Rhea" id="RHEA:21708"/>
        <dbReference type="ChEBI" id="CHEBI:15377"/>
        <dbReference type="ChEBI" id="CHEBI:16335"/>
        <dbReference type="ChEBI" id="CHEBI:57856"/>
        <dbReference type="ChEBI" id="CHEBI:58199"/>
        <dbReference type="EC" id="3.13.2.1"/>
    </reaction>
</comment>
<comment type="cofactor">
    <cofactor evidence="1">
        <name>NAD(+)</name>
        <dbReference type="ChEBI" id="CHEBI:57540"/>
    </cofactor>
    <text evidence="1">Binds 1 NAD(+) per subunit.</text>
</comment>
<comment type="pathway">
    <text evidence="1">Amino-acid biosynthesis; L-homocysteine biosynthesis; L-homocysteine from S-adenosyl-L-homocysteine: step 1/1.</text>
</comment>
<comment type="subcellular location">
    <subcellularLocation>
        <location evidence="1">Cytoplasm</location>
    </subcellularLocation>
</comment>
<comment type="similarity">
    <text evidence="1">Belongs to the adenosylhomocysteinase family.</text>
</comment>
<gene>
    <name evidence="1" type="primary">ahcY</name>
    <name type="ordered locus">GFO_3067</name>
</gene>
<feature type="chain" id="PRO_1000024727" description="Adenosylhomocysteinase">
    <location>
        <begin position="1"/>
        <end position="438"/>
    </location>
</feature>
<feature type="binding site" evidence="1">
    <location>
        <position position="61"/>
    </location>
    <ligand>
        <name>substrate</name>
    </ligand>
</feature>
<feature type="binding site" evidence="1">
    <location>
        <position position="137"/>
    </location>
    <ligand>
        <name>substrate</name>
    </ligand>
</feature>
<feature type="binding site" evidence="1">
    <location>
        <position position="162"/>
    </location>
    <ligand>
        <name>substrate</name>
    </ligand>
</feature>
<feature type="binding site" evidence="1">
    <location>
        <begin position="163"/>
        <end position="165"/>
    </location>
    <ligand>
        <name>NAD(+)</name>
        <dbReference type="ChEBI" id="CHEBI:57540"/>
    </ligand>
</feature>
<feature type="binding site" evidence="1">
    <location>
        <position position="192"/>
    </location>
    <ligand>
        <name>substrate</name>
    </ligand>
</feature>
<feature type="binding site" evidence="1">
    <location>
        <position position="196"/>
    </location>
    <ligand>
        <name>substrate</name>
    </ligand>
</feature>
<feature type="binding site" evidence="1">
    <location>
        <position position="197"/>
    </location>
    <ligand>
        <name>NAD(+)</name>
        <dbReference type="ChEBI" id="CHEBI:57540"/>
    </ligand>
</feature>
<feature type="binding site" evidence="1">
    <location>
        <begin position="226"/>
        <end position="231"/>
    </location>
    <ligand>
        <name>NAD(+)</name>
        <dbReference type="ChEBI" id="CHEBI:57540"/>
    </ligand>
</feature>
<feature type="binding site" evidence="1">
    <location>
        <position position="249"/>
    </location>
    <ligand>
        <name>NAD(+)</name>
        <dbReference type="ChEBI" id="CHEBI:57540"/>
    </ligand>
</feature>
<feature type="binding site" evidence="1">
    <location>
        <position position="284"/>
    </location>
    <ligand>
        <name>NAD(+)</name>
        <dbReference type="ChEBI" id="CHEBI:57540"/>
    </ligand>
</feature>
<feature type="binding site" evidence="1">
    <location>
        <begin position="305"/>
        <end position="307"/>
    </location>
    <ligand>
        <name>NAD(+)</name>
        <dbReference type="ChEBI" id="CHEBI:57540"/>
    </ligand>
</feature>
<feature type="binding site" evidence="1">
    <location>
        <position position="352"/>
    </location>
    <ligand>
        <name>NAD(+)</name>
        <dbReference type="ChEBI" id="CHEBI:57540"/>
    </ligand>
</feature>
<accession>A0M5W6</accession>
<protein>
    <recommendedName>
        <fullName evidence="1">Adenosylhomocysteinase</fullName>
        <ecNumber evidence="1">3.13.2.1</ecNumber>
    </recommendedName>
    <alternativeName>
        <fullName evidence="1">S-adenosyl-L-homocysteine hydrolase</fullName>
        <shortName evidence="1">AdoHcyase</shortName>
    </alternativeName>
</protein>
<evidence type="ECO:0000255" key="1">
    <source>
        <dbReference type="HAMAP-Rule" id="MF_00563"/>
    </source>
</evidence>
<dbReference type="EC" id="3.13.2.1" evidence="1"/>
<dbReference type="EMBL" id="CU207366">
    <property type="protein sequence ID" value="CAL68011.1"/>
    <property type="molecule type" value="Genomic_DNA"/>
</dbReference>
<dbReference type="RefSeq" id="WP_011710912.1">
    <property type="nucleotide sequence ID" value="NC_008571.1"/>
</dbReference>
<dbReference type="SMR" id="A0M5W6"/>
<dbReference type="STRING" id="411154.GFO_3067"/>
<dbReference type="KEGG" id="gfo:GFO_3067"/>
<dbReference type="eggNOG" id="COG0499">
    <property type="taxonomic scope" value="Bacteria"/>
</dbReference>
<dbReference type="HOGENOM" id="CLU_025194_2_1_10"/>
<dbReference type="OrthoDB" id="9802717at2"/>
<dbReference type="UniPathway" id="UPA00314">
    <property type="reaction ID" value="UER00076"/>
</dbReference>
<dbReference type="Proteomes" id="UP000000755">
    <property type="component" value="Chromosome"/>
</dbReference>
<dbReference type="GO" id="GO:0005829">
    <property type="term" value="C:cytosol"/>
    <property type="evidence" value="ECO:0007669"/>
    <property type="project" value="TreeGrafter"/>
</dbReference>
<dbReference type="GO" id="GO:0004013">
    <property type="term" value="F:adenosylhomocysteinase activity"/>
    <property type="evidence" value="ECO:0007669"/>
    <property type="project" value="UniProtKB-UniRule"/>
</dbReference>
<dbReference type="GO" id="GO:0071269">
    <property type="term" value="P:L-homocysteine biosynthetic process"/>
    <property type="evidence" value="ECO:0007669"/>
    <property type="project" value="UniProtKB-UniRule"/>
</dbReference>
<dbReference type="GO" id="GO:0006730">
    <property type="term" value="P:one-carbon metabolic process"/>
    <property type="evidence" value="ECO:0007669"/>
    <property type="project" value="UniProtKB-KW"/>
</dbReference>
<dbReference type="GO" id="GO:0033353">
    <property type="term" value="P:S-adenosylmethionine cycle"/>
    <property type="evidence" value="ECO:0007669"/>
    <property type="project" value="TreeGrafter"/>
</dbReference>
<dbReference type="CDD" id="cd00401">
    <property type="entry name" value="SAHH"/>
    <property type="match status" value="1"/>
</dbReference>
<dbReference type="FunFam" id="3.40.50.1480:FF:000004">
    <property type="entry name" value="Adenosylhomocysteinase"/>
    <property type="match status" value="1"/>
</dbReference>
<dbReference type="FunFam" id="3.40.50.720:FF:000004">
    <property type="entry name" value="Adenosylhomocysteinase"/>
    <property type="match status" value="1"/>
</dbReference>
<dbReference type="Gene3D" id="3.40.50.1480">
    <property type="entry name" value="Adenosylhomocysteinase-like"/>
    <property type="match status" value="3"/>
</dbReference>
<dbReference type="Gene3D" id="3.40.50.720">
    <property type="entry name" value="NAD(P)-binding Rossmann-like Domain"/>
    <property type="match status" value="1"/>
</dbReference>
<dbReference type="HAMAP" id="MF_00563">
    <property type="entry name" value="AdoHcyase"/>
    <property type="match status" value="1"/>
</dbReference>
<dbReference type="InterPro" id="IPR042172">
    <property type="entry name" value="Adenosylhomocyst_ase-like_sf"/>
</dbReference>
<dbReference type="InterPro" id="IPR000043">
    <property type="entry name" value="Adenosylhomocysteinase-like"/>
</dbReference>
<dbReference type="InterPro" id="IPR015878">
    <property type="entry name" value="Ado_hCys_hydrolase_NAD-bd"/>
</dbReference>
<dbReference type="InterPro" id="IPR036291">
    <property type="entry name" value="NAD(P)-bd_dom_sf"/>
</dbReference>
<dbReference type="InterPro" id="IPR020082">
    <property type="entry name" value="S-Ado-L-homoCys_hydrolase_CS"/>
</dbReference>
<dbReference type="NCBIfam" id="TIGR00936">
    <property type="entry name" value="ahcY"/>
    <property type="match status" value="1"/>
</dbReference>
<dbReference type="NCBIfam" id="NF004005">
    <property type="entry name" value="PRK05476.2-3"/>
    <property type="match status" value="1"/>
</dbReference>
<dbReference type="PANTHER" id="PTHR23420">
    <property type="entry name" value="ADENOSYLHOMOCYSTEINASE"/>
    <property type="match status" value="1"/>
</dbReference>
<dbReference type="PANTHER" id="PTHR23420:SF0">
    <property type="entry name" value="ADENOSYLHOMOCYSTEINASE"/>
    <property type="match status" value="1"/>
</dbReference>
<dbReference type="Pfam" id="PF05221">
    <property type="entry name" value="AdoHcyase"/>
    <property type="match status" value="2"/>
</dbReference>
<dbReference type="Pfam" id="PF00670">
    <property type="entry name" value="AdoHcyase_NAD"/>
    <property type="match status" value="1"/>
</dbReference>
<dbReference type="PIRSF" id="PIRSF001109">
    <property type="entry name" value="Ad_hcy_hydrolase"/>
    <property type="match status" value="1"/>
</dbReference>
<dbReference type="SMART" id="SM00996">
    <property type="entry name" value="AdoHcyase"/>
    <property type="match status" value="1"/>
</dbReference>
<dbReference type="SMART" id="SM00997">
    <property type="entry name" value="AdoHcyase_NAD"/>
    <property type="match status" value="1"/>
</dbReference>
<dbReference type="SUPFAM" id="SSF52283">
    <property type="entry name" value="Formate/glycerate dehydrogenase catalytic domain-like"/>
    <property type="match status" value="1"/>
</dbReference>
<dbReference type="SUPFAM" id="SSF51735">
    <property type="entry name" value="NAD(P)-binding Rossmann-fold domains"/>
    <property type="match status" value="1"/>
</dbReference>
<dbReference type="PROSITE" id="PS00738">
    <property type="entry name" value="ADOHCYASE_1"/>
    <property type="match status" value="1"/>
</dbReference>
<dbReference type="PROSITE" id="PS00739">
    <property type="entry name" value="ADOHCYASE_2"/>
    <property type="match status" value="1"/>
</dbReference>
<proteinExistence type="inferred from homology"/>
<keyword id="KW-0963">Cytoplasm</keyword>
<keyword id="KW-0378">Hydrolase</keyword>
<keyword id="KW-0520">NAD</keyword>
<keyword id="KW-0554">One-carbon metabolism</keyword>
<sequence>MSTKTVPYTAYKVKDIELAEYGRREIELAEAEMPGLMALRKEYGASKPLKGARIAGCLHMTIQTAVLIETLVELGANVTWSSCNIFSTQDHAAAAIAAAGIPVYAWKGLTEEEFNWCIEQTLFFGEDRKPLNMILDDGGDLTNMVLDEYPELAEGIKGLSEETTTGVHRLYERMKKGTLPMPAINVNDSVTKSKFDNKYGCRESAVDAIRRATDVMLAGKRVVVCGYGDVGKGTAQSFKGAGSIVTVTEIDPICALQAAMDGFEVKQLETVLPKADIVITTTGNKDIVRPEHFEAMKDKTIVANIGHFDNEIAVSWLNEKHGDSKVEIKPQVDKYTINGKDIILLAEGRLVNLGCATGHPSFVMSNSFTNQTLAQIELWKNTDEYKNEVYMLPKHLDEKVAKLHLERIGVELTELKQDQAEYIGVTVEGPYKPEYYRY</sequence>